<gene>
    <name evidence="1" type="primary">gltX</name>
    <name type="ordered locus">RHECIAT_CH0003927</name>
</gene>
<name>SYE_RHIE6</name>
<keyword id="KW-0030">Aminoacyl-tRNA synthetase</keyword>
<keyword id="KW-0067">ATP-binding</keyword>
<keyword id="KW-0963">Cytoplasm</keyword>
<keyword id="KW-0436">Ligase</keyword>
<keyword id="KW-0547">Nucleotide-binding</keyword>
<keyword id="KW-0648">Protein biosynthesis</keyword>
<accession>B3Q0S3</accession>
<comment type="function">
    <text evidence="1">Catalyzes the attachment of glutamate to tRNA(Glu) in a two-step reaction: glutamate is first activated by ATP to form Glu-AMP and then transferred to the acceptor end of tRNA(Glu).</text>
</comment>
<comment type="catalytic activity">
    <reaction evidence="1">
        <text>tRNA(Glu) + L-glutamate + ATP = L-glutamyl-tRNA(Glu) + AMP + diphosphate</text>
        <dbReference type="Rhea" id="RHEA:23540"/>
        <dbReference type="Rhea" id="RHEA-COMP:9663"/>
        <dbReference type="Rhea" id="RHEA-COMP:9680"/>
        <dbReference type="ChEBI" id="CHEBI:29985"/>
        <dbReference type="ChEBI" id="CHEBI:30616"/>
        <dbReference type="ChEBI" id="CHEBI:33019"/>
        <dbReference type="ChEBI" id="CHEBI:78442"/>
        <dbReference type="ChEBI" id="CHEBI:78520"/>
        <dbReference type="ChEBI" id="CHEBI:456215"/>
        <dbReference type="EC" id="6.1.1.17"/>
    </reaction>
</comment>
<comment type="subunit">
    <text evidence="1">Monomer.</text>
</comment>
<comment type="subcellular location">
    <subcellularLocation>
        <location evidence="1">Cytoplasm</location>
    </subcellularLocation>
</comment>
<comment type="similarity">
    <text evidence="1">Belongs to the class-I aminoacyl-tRNA synthetase family. Glutamate--tRNA ligase type 1 subfamily.</text>
</comment>
<organism>
    <name type="scientific">Rhizobium etli (strain CIAT 652)</name>
    <dbReference type="NCBI Taxonomy" id="491916"/>
    <lineage>
        <taxon>Bacteria</taxon>
        <taxon>Pseudomonadati</taxon>
        <taxon>Pseudomonadota</taxon>
        <taxon>Alphaproteobacteria</taxon>
        <taxon>Hyphomicrobiales</taxon>
        <taxon>Rhizobiaceae</taxon>
        <taxon>Rhizobium/Agrobacterium group</taxon>
        <taxon>Rhizobium</taxon>
    </lineage>
</organism>
<evidence type="ECO:0000255" key="1">
    <source>
        <dbReference type="HAMAP-Rule" id="MF_00022"/>
    </source>
</evidence>
<feature type="chain" id="PRO_0000367741" description="Glutamate--tRNA ligase">
    <location>
        <begin position="1"/>
        <end position="484"/>
    </location>
</feature>
<feature type="short sequence motif" description="'HIGH' region" evidence="1">
    <location>
        <begin position="12"/>
        <end position="22"/>
    </location>
</feature>
<feature type="short sequence motif" description="'KMSKS' region" evidence="1">
    <location>
        <begin position="253"/>
        <end position="257"/>
    </location>
</feature>
<feature type="binding site" evidence="1">
    <location>
        <position position="256"/>
    </location>
    <ligand>
        <name>ATP</name>
        <dbReference type="ChEBI" id="CHEBI:30616"/>
    </ligand>
</feature>
<dbReference type="EC" id="6.1.1.17" evidence="1"/>
<dbReference type="EMBL" id="CP001074">
    <property type="protein sequence ID" value="ACE92864.1"/>
    <property type="molecule type" value="Genomic_DNA"/>
</dbReference>
<dbReference type="SMR" id="B3Q0S3"/>
<dbReference type="KEGG" id="rec:RHECIAT_CH0003927"/>
<dbReference type="eggNOG" id="COG0008">
    <property type="taxonomic scope" value="Bacteria"/>
</dbReference>
<dbReference type="HOGENOM" id="CLU_015768_6_3_5"/>
<dbReference type="Proteomes" id="UP000008817">
    <property type="component" value="Chromosome"/>
</dbReference>
<dbReference type="GO" id="GO:0005829">
    <property type="term" value="C:cytosol"/>
    <property type="evidence" value="ECO:0007669"/>
    <property type="project" value="TreeGrafter"/>
</dbReference>
<dbReference type="GO" id="GO:0005524">
    <property type="term" value="F:ATP binding"/>
    <property type="evidence" value="ECO:0007669"/>
    <property type="project" value="UniProtKB-UniRule"/>
</dbReference>
<dbReference type="GO" id="GO:0004818">
    <property type="term" value="F:glutamate-tRNA ligase activity"/>
    <property type="evidence" value="ECO:0007669"/>
    <property type="project" value="UniProtKB-UniRule"/>
</dbReference>
<dbReference type="GO" id="GO:0000049">
    <property type="term" value="F:tRNA binding"/>
    <property type="evidence" value="ECO:0007669"/>
    <property type="project" value="InterPro"/>
</dbReference>
<dbReference type="GO" id="GO:0008270">
    <property type="term" value="F:zinc ion binding"/>
    <property type="evidence" value="ECO:0007669"/>
    <property type="project" value="InterPro"/>
</dbReference>
<dbReference type="GO" id="GO:0006424">
    <property type="term" value="P:glutamyl-tRNA aminoacylation"/>
    <property type="evidence" value="ECO:0007669"/>
    <property type="project" value="UniProtKB-UniRule"/>
</dbReference>
<dbReference type="CDD" id="cd00808">
    <property type="entry name" value="GluRS_core"/>
    <property type="match status" value="1"/>
</dbReference>
<dbReference type="FunFam" id="3.40.50.620:FF:000045">
    <property type="entry name" value="Glutamate--tRNA ligase, mitochondrial"/>
    <property type="match status" value="1"/>
</dbReference>
<dbReference type="Gene3D" id="1.10.10.350">
    <property type="match status" value="1"/>
</dbReference>
<dbReference type="Gene3D" id="3.40.50.620">
    <property type="entry name" value="HUPs"/>
    <property type="match status" value="1"/>
</dbReference>
<dbReference type="HAMAP" id="MF_00022">
    <property type="entry name" value="Glu_tRNA_synth_type1"/>
    <property type="match status" value="1"/>
</dbReference>
<dbReference type="InterPro" id="IPR045462">
    <property type="entry name" value="aa-tRNA-synth_I_cd-bd"/>
</dbReference>
<dbReference type="InterPro" id="IPR020751">
    <property type="entry name" value="aa-tRNA-synth_I_codon-bd_sub2"/>
</dbReference>
<dbReference type="InterPro" id="IPR001412">
    <property type="entry name" value="aa-tRNA-synth_I_CS"/>
</dbReference>
<dbReference type="InterPro" id="IPR008925">
    <property type="entry name" value="aa_tRNA-synth_I_cd-bd_sf"/>
</dbReference>
<dbReference type="InterPro" id="IPR004527">
    <property type="entry name" value="Glu-tRNA-ligase_bac/mito"/>
</dbReference>
<dbReference type="InterPro" id="IPR000924">
    <property type="entry name" value="Glu/Gln-tRNA-synth"/>
</dbReference>
<dbReference type="InterPro" id="IPR020058">
    <property type="entry name" value="Glu/Gln-tRNA-synth_Ib_cat-dom"/>
</dbReference>
<dbReference type="InterPro" id="IPR049940">
    <property type="entry name" value="GluQ/Sye"/>
</dbReference>
<dbReference type="InterPro" id="IPR033910">
    <property type="entry name" value="GluRS_core"/>
</dbReference>
<dbReference type="InterPro" id="IPR014729">
    <property type="entry name" value="Rossmann-like_a/b/a_fold"/>
</dbReference>
<dbReference type="NCBIfam" id="TIGR00464">
    <property type="entry name" value="gltX_bact"/>
    <property type="match status" value="1"/>
</dbReference>
<dbReference type="PANTHER" id="PTHR43311">
    <property type="entry name" value="GLUTAMATE--TRNA LIGASE"/>
    <property type="match status" value="1"/>
</dbReference>
<dbReference type="PANTHER" id="PTHR43311:SF2">
    <property type="entry name" value="GLUTAMATE--TRNA LIGASE, MITOCHONDRIAL-RELATED"/>
    <property type="match status" value="1"/>
</dbReference>
<dbReference type="Pfam" id="PF19269">
    <property type="entry name" value="Anticodon_2"/>
    <property type="match status" value="1"/>
</dbReference>
<dbReference type="Pfam" id="PF00749">
    <property type="entry name" value="tRNA-synt_1c"/>
    <property type="match status" value="1"/>
</dbReference>
<dbReference type="PRINTS" id="PR00987">
    <property type="entry name" value="TRNASYNTHGLU"/>
</dbReference>
<dbReference type="SUPFAM" id="SSF48163">
    <property type="entry name" value="An anticodon-binding domain of class I aminoacyl-tRNA synthetases"/>
    <property type="match status" value="1"/>
</dbReference>
<dbReference type="SUPFAM" id="SSF52374">
    <property type="entry name" value="Nucleotidylyl transferase"/>
    <property type="match status" value="1"/>
</dbReference>
<dbReference type="PROSITE" id="PS00178">
    <property type="entry name" value="AA_TRNA_LIGASE_I"/>
    <property type="match status" value="1"/>
</dbReference>
<sequence>MTTSGVRVRIAPSPTGEPHVGTAYIALFNYLFAKKHGGEFILRIEDTDATRSTPEFETKVLDALKWCGLEWKEGPDIGGPYGPYRQSDRKPIYQPYAQELLDKGHAFRCFCTPARLEQMREAQRAAGKPPKYDGLCLSLTAEEVTSRTAAGEASVIRMKIPPEGSCDFTDGVYGDVSIPWDSVDMQVLIKADGMPTYHMANVIDDHLMKITHVARGEEWLASVPKHILLYRYFGWDQPVFMHLSLMRNADKSKLSKRKNPTSISYYSALGYIPEALMNFLGLFFIQIAEGEELLTMDELSEKFDPDNLSKAGAIFDIQKLDWLNGRWIREKLSEEEFQARVLAWAMENDRLKAGLRLSQTRISKLGELPDLAGFLLKSDLGLQPSDFAKIKSPPEEILEILNTVQPDLEKILEWNVETIEAELRAISDRMGKKLKVVVSPLFVAVSGSPRSLPLFDSMAILGRSVVRQRLKLAAQAVAALVGAK</sequence>
<protein>
    <recommendedName>
        <fullName evidence="1">Glutamate--tRNA ligase</fullName>
        <ecNumber evidence="1">6.1.1.17</ecNumber>
    </recommendedName>
    <alternativeName>
        <fullName evidence="1">Glutamyl-tRNA synthetase</fullName>
        <shortName evidence="1">GluRS</shortName>
    </alternativeName>
</protein>
<reference key="1">
    <citation type="journal article" date="2010" name="Appl. Environ. Microbiol.">
        <title>Conserved symbiotic plasmid DNA sequences in the multireplicon pangenomic structure of Rhizobium etli.</title>
        <authorList>
            <person name="Gonzalez V."/>
            <person name="Acosta J.L."/>
            <person name="Santamaria R.I."/>
            <person name="Bustos P."/>
            <person name="Fernandez J.L."/>
            <person name="Hernandez Gonzalez I.L."/>
            <person name="Diaz R."/>
            <person name="Flores M."/>
            <person name="Palacios R."/>
            <person name="Mora J."/>
            <person name="Davila G."/>
        </authorList>
    </citation>
    <scope>NUCLEOTIDE SEQUENCE [LARGE SCALE GENOMIC DNA]</scope>
    <source>
        <strain>CIAT 652</strain>
    </source>
</reference>
<proteinExistence type="inferred from homology"/>